<sequence>AATAATPATAATPATAARA</sequence>
<name>ANP7_ELEGR</name>
<organism>
    <name type="scientific">Eleginus gracilis</name>
    <name type="common">Saffron cod</name>
    <name type="synonym">Gadus gracilis</name>
    <dbReference type="NCBI Taxonomy" id="8047"/>
    <lineage>
        <taxon>Eukaryota</taxon>
        <taxon>Metazoa</taxon>
        <taxon>Chordata</taxon>
        <taxon>Craniata</taxon>
        <taxon>Vertebrata</taxon>
        <taxon>Euteleostomi</taxon>
        <taxon>Actinopterygii</taxon>
        <taxon>Neopterygii</taxon>
        <taxon>Teleostei</taxon>
        <taxon>Neoteleostei</taxon>
        <taxon>Acanthomorphata</taxon>
        <taxon>Zeiogadaria</taxon>
        <taxon>Gadariae</taxon>
        <taxon>Gadiformes</taxon>
        <taxon>Gadoidei</taxon>
        <taxon>Gadidae</taxon>
        <taxon>Eleginus</taxon>
    </lineage>
</organism>
<feature type="peptide" id="PRO_0000155141" description="Ice-structuring glycoprotein 7R">
    <location>
        <begin position="1"/>
        <end position="19"/>
    </location>
</feature>
<proteinExistence type="evidence at protein level"/>
<accession>P11920</accession>
<protein>
    <recommendedName>
        <fullName>Ice-structuring glycoprotein 7R</fullName>
        <shortName>ISGP 7R</shortName>
    </recommendedName>
    <alternativeName>
        <fullName>Antifreeze glycoprotein 7R</fullName>
    </alternativeName>
</protein>
<reference key="1">
    <citation type="journal article" date="1986" name="J. Biol. Chem.">
        <title>Purification and primary sequences of the major arginine-containing antifreeze glycopeptides from the fish Eleginus gracilis.</title>
        <authorList>
            <person name="Burcham T.S."/>
            <person name="Osuga D.T."/>
            <person name="Rao B.N.N."/>
            <person name="Bush C.A."/>
            <person name="Feeney R.E."/>
        </authorList>
    </citation>
    <scope>PROTEIN SEQUENCE</scope>
</reference>
<comment type="function">
    <text>Antifreeze proteins lower the blood freezing point.</text>
</comment>
<comment type="subcellular location">
    <subcellularLocation>
        <location>Secreted</location>
    </subcellularLocation>
</comment>
<comment type="PTM">
    <text evidence="1">O-glycosylated; contains disaccharide galactose-N-acetylgalactosamine attached to threonines.</text>
</comment>
<dbReference type="PIR" id="B25213">
    <property type="entry name" value="B25213"/>
</dbReference>
<dbReference type="GO" id="GO:0005576">
    <property type="term" value="C:extracellular region"/>
    <property type="evidence" value="ECO:0007669"/>
    <property type="project" value="UniProtKB-SubCell"/>
</dbReference>
<evidence type="ECO:0000250" key="1"/>
<keyword id="KW-0047">Antifreeze protein</keyword>
<keyword id="KW-0903">Direct protein sequencing</keyword>
<keyword id="KW-0325">Glycoprotein</keyword>
<keyword id="KW-0964">Secreted</keyword>